<keyword id="KW-0217">Developmental protein</keyword>
<keyword id="KW-0238">DNA-binding</keyword>
<keyword id="KW-0539">Nucleus</keyword>
<keyword id="KW-0563">Paired box</keyword>
<keyword id="KW-1185">Reference proteome</keyword>
<keyword id="KW-0804">Transcription</keyword>
<keyword id="KW-0805">Transcription regulation</keyword>
<dbReference type="EMBL" id="AB248957">
    <property type="protein sequence ID" value="BAE79272.1"/>
    <property type="molecule type" value="mRNA"/>
</dbReference>
<dbReference type="RefSeq" id="NP_001034628.1">
    <property type="nucleotide sequence ID" value="NM_001039539.2"/>
</dbReference>
<dbReference type="RefSeq" id="XP_063118185.1">
    <property type="nucleotide sequence ID" value="XM_063262115.1"/>
</dbReference>
<dbReference type="SMR" id="Q2L4T2"/>
<dbReference type="FunCoup" id="Q2L4T2">
    <property type="interactions" value="438"/>
</dbReference>
<dbReference type="STRING" id="10116.ENSRNOP00000011802"/>
<dbReference type="GlyGen" id="Q2L4T2">
    <property type="glycosylation" value="2 sites"/>
</dbReference>
<dbReference type="iPTMnet" id="Q2L4T2"/>
<dbReference type="PhosphoSitePlus" id="Q2L4T2"/>
<dbReference type="PaxDb" id="10116-ENSRNOP00000011802"/>
<dbReference type="Ensembl" id="ENSRNOT00000095003.1">
    <property type="protein sequence ID" value="ENSRNOP00000080106.1"/>
    <property type="gene ID" value="ENSRNOG00000065348.1"/>
</dbReference>
<dbReference type="GeneID" id="362741"/>
<dbReference type="KEGG" id="rno:362741"/>
<dbReference type="UCSC" id="RGD:1560838">
    <property type="organism name" value="rat"/>
</dbReference>
<dbReference type="AGR" id="RGD:1560838"/>
<dbReference type="CTD" id="5083"/>
<dbReference type="RGD" id="1560838">
    <property type="gene designation" value="Pax9"/>
</dbReference>
<dbReference type="eggNOG" id="KOG3517">
    <property type="taxonomic scope" value="Eukaryota"/>
</dbReference>
<dbReference type="GeneTree" id="ENSGT00940000159896"/>
<dbReference type="InParanoid" id="Q2L4T2"/>
<dbReference type="OrthoDB" id="11441at9989"/>
<dbReference type="PhylomeDB" id="Q2L4T2"/>
<dbReference type="TreeFam" id="TF315397"/>
<dbReference type="PRO" id="PR:Q2L4T2"/>
<dbReference type="Proteomes" id="UP000002494">
    <property type="component" value="Chromosome 6"/>
</dbReference>
<dbReference type="GO" id="GO:0005634">
    <property type="term" value="C:nucleus"/>
    <property type="evidence" value="ECO:0007669"/>
    <property type="project" value="UniProtKB-SubCell"/>
</dbReference>
<dbReference type="GO" id="GO:0001228">
    <property type="term" value="F:DNA-binding transcription activator activity, RNA polymerase II-specific"/>
    <property type="evidence" value="ECO:0000266"/>
    <property type="project" value="RGD"/>
</dbReference>
<dbReference type="GO" id="GO:0000981">
    <property type="term" value="F:DNA-binding transcription factor activity, RNA polymerase II-specific"/>
    <property type="evidence" value="ECO:0000318"/>
    <property type="project" value="GO_Central"/>
</dbReference>
<dbReference type="GO" id="GO:0000978">
    <property type="term" value="F:RNA polymerase II cis-regulatory region sequence-specific DNA binding"/>
    <property type="evidence" value="ECO:0000318"/>
    <property type="project" value="GO_Central"/>
</dbReference>
<dbReference type="GO" id="GO:0000977">
    <property type="term" value="F:RNA polymerase II transcription regulatory region sequence-specific DNA binding"/>
    <property type="evidence" value="ECO:0000266"/>
    <property type="project" value="RGD"/>
</dbReference>
<dbReference type="GO" id="GO:1990837">
    <property type="term" value="F:sequence-specific double-stranded DNA binding"/>
    <property type="evidence" value="ECO:0000266"/>
    <property type="project" value="RGD"/>
</dbReference>
<dbReference type="GO" id="GO:0071363">
    <property type="term" value="P:cellular response to growth factor stimulus"/>
    <property type="evidence" value="ECO:0000266"/>
    <property type="project" value="RGD"/>
</dbReference>
<dbReference type="GO" id="GO:0007492">
    <property type="term" value="P:endoderm development"/>
    <property type="evidence" value="ECO:0000266"/>
    <property type="project" value="RGD"/>
</dbReference>
<dbReference type="GO" id="GO:0060325">
    <property type="term" value="P:face morphogenesis"/>
    <property type="evidence" value="ECO:0000266"/>
    <property type="project" value="RGD"/>
</dbReference>
<dbReference type="GO" id="GO:0045892">
    <property type="term" value="P:negative regulation of DNA-templated transcription"/>
    <property type="evidence" value="ECO:0000266"/>
    <property type="project" value="RGD"/>
</dbReference>
<dbReference type="GO" id="GO:0042476">
    <property type="term" value="P:odontogenesis"/>
    <property type="evidence" value="ECO:0000266"/>
    <property type="project" value="RGD"/>
</dbReference>
<dbReference type="GO" id="GO:0045944">
    <property type="term" value="P:positive regulation of transcription by RNA polymerase II"/>
    <property type="evidence" value="ECO:0000266"/>
    <property type="project" value="RGD"/>
</dbReference>
<dbReference type="GO" id="GO:0042481">
    <property type="term" value="P:regulation of odontogenesis"/>
    <property type="evidence" value="ECO:0000266"/>
    <property type="project" value="RGD"/>
</dbReference>
<dbReference type="GO" id="GO:0006357">
    <property type="term" value="P:regulation of transcription by RNA polymerase II"/>
    <property type="evidence" value="ECO:0000318"/>
    <property type="project" value="GO_Central"/>
</dbReference>
<dbReference type="CDD" id="cd00131">
    <property type="entry name" value="PAX"/>
    <property type="match status" value="1"/>
</dbReference>
<dbReference type="FunFam" id="1.10.10.10:FF:000003">
    <property type="entry name" value="Paired box protein Pax-6"/>
    <property type="match status" value="1"/>
</dbReference>
<dbReference type="FunFam" id="1.10.10.10:FF:000084">
    <property type="entry name" value="paired box protein Pax-9"/>
    <property type="match status" value="1"/>
</dbReference>
<dbReference type="Gene3D" id="1.10.10.10">
    <property type="entry name" value="Winged helix-like DNA-binding domain superfamily/Winged helix DNA-binding domain"/>
    <property type="match status" value="2"/>
</dbReference>
<dbReference type="InterPro" id="IPR009057">
    <property type="entry name" value="Homeodomain-like_sf"/>
</dbReference>
<dbReference type="InterPro" id="IPR043182">
    <property type="entry name" value="PAIRED_DNA-bd_dom"/>
</dbReference>
<dbReference type="InterPro" id="IPR001523">
    <property type="entry name" value="Paired_dom"/>
</dbReference>
<dbReference type="InterPro" id="IPR043565">
    <property type="entry name" value="PAX_fam"/>
</dbReference>
<dbReference type="InterPro" id="IPR036388">
    <property type="entry name" value="WH-like_DNA-bd_sf"/>
</dbReference>
<dbReference type="PANTHER" id="PTHR45636">
    <property type="entry name" value="PAIRED BOX PROTEIN PAX-6-RELATED-RELATED"/>
    <property type="match status" value="1"/>
</dbReference>
<dbReference type="PANTHER" id="PTHR45636:SF13">
    <property type="entry name" value="PAIRED BOX PROTEIN PAX-9"/>
    <property type="match status" value="1"/>
</dbReference>
<dbReference type="Pfam" id="PF00292">
    <property type="entry name" value="PAX"/>
    <property type="match status" value="1"/>
</dbReference>
<dbReference type="PRINTS" id="PR00027">
    <property type="entry name" value="PAIREDBOX"/>
</dbReference>
<dbReference type="SMART" id="SM00351">
    <property type="entry name" value="PAX"/>
    <property type="match status" value="1"/>
</dbReference>
<dbReference type="SUPFAM" id="SSF46689">
    <property type="entry name" value="Homeodomain-like"/>
    <property type="match status" value="1"/>
</dbReference>
<dbReference type="PROSITE" id="PS00034">
    <property type="entry name" value="PAIRED_1"/>
    <property type="match status" value="1"/>
</dbReference>
<dbReference type="PROSITE" id="PS51057">
    <property type="entry name" value="PAIRED_2"/>
    <property type="match status" value="1"/>
</dbReference>
<protein>
    <recommendedName>
        <fullName>Paired box protein Pax-9</fullName>
    </recommendedName>
</protein>
<organism>
    <name type="scientific">Rattus norvegicus</name>
    <name type="common">Rat</name>
    <dbReference type="NCBI Taxonomy" id="10116"/>
    <lineage>
        <taxon>Eukaryota</taxon>
        <taxon>Metazoa</taxon>
        <taxon>Chordata</taxon>
        <taxon>Craniata</taxon>
        <taxon>Vertebrata</taxon>
        <taxon>Euteleostomi</taxon>
        <taxon>Mammalia</taxon>
        <taxon>Eutheria</taxon>
        <taxon>Euarchontoglires</taxon>
        <taxon>Glires</taxon>
        <taxon>Rodentia</taxon>
        <taxon>Myomorpha</taxon>
        <taxon>Muroidea</taxon>
        <taxon>Muridae</taxon>
        <taxon>Murinae</taxon>
        <taxon>Rattus</taxon>
    </lineage>
</organism>
<accession>Q2L4T2</accession>
<proteinExistence type="evidence at transcript level"/>
<gene>
    <name evidence="5" type="primary">Pax9</name>
</gene>
<sequence length="342" mass="36379">MEPAFGEVNQLGGVFVNGRPLPNAIRLRIVELAQLGIRPCDISRQLRVSHGCVSKILARYNETGSILPGAIGGSKPRVTTPTVVKHIRTYKQRDPGIFAWEIRDRLLADGVCDKYNVPSVSSISRILRNKIGNLAQQGHYDSYKQHQPAPQPALPYNHIYSYPSPITAAAAKVPTPPGVPAIPGSVALPRTWPSSHSVTDILGIRSITDQGVSDSSPYHSPKVEEWSSLGRNNFSAAAPHAVNGLEKGALEQEAKYGQAPNGLPAVSSFVSASSMAPYPTPAQVSPYMTYSAAPSGYVAGHGWQHAGSTPLSPHNCDIPTSLAFKGMQAAREGSHSVAASAL</sequence>
<name>PAX9_RAT</name>
<feature type="chain" id="PRO_0000244487" description="Paired box protein Pax-9">
    <location>
        <begin position="1"/>
        <end position="342"/>
    </location>
</feature>
<feature type="DNA-binding region" description="Paired" evidence="3">
    <location>
        <begin position="4"/>
        <end position="130"/>
    </location>
</feature>
<feature type="region of interest" description="PAI subdomain" evidence="3">
    <location>
        <begin position="7"/>
        <end position="63"/>
    </location>
</feature>
<feature type="region of interest" description="RED subdomain" evidence="3">
    <location>
        <begin position="82"/>
        <end position="130"/>
    </location>
</feature>
<feature type="region of interest" description="Interaction with KDM5B" evidence="1">
    <location>
        <begin position="168"/>
        <end position="189"/>
    </location>
</feature>
<comment type="function">
    <text evidence="2">Transcription factor required for normal development of thymus, parathyroid glands, ultimobranchial bodies, teeth, skeletal elements of skull and larynx as well as distal limbs.</text>
</comment>
<comment type="subunit">
    <text evidence="1">Interacts with KDM5B.</text>
</comment>
<comment type="subcellular location">
    <subcellularLocation>
        <location evidence="4">Nucleus</location>
    </subcellularLocation>
</comment>
<evidence type="ECO:0000250" key="1"/>
<evidence type="ECO:0000250" key="2">
    <source>
        <dbReference type="UniProtKB" id="P47242"/>
    </source>
</evidence>
<evidence type="ECO:0000255" key="3">
    <source>
        <dbReference type="PROSITE-ProRule" id="PRU00381"/>
    </source>
</evidence>
<evidence type="ECO:0000305" key="4"/>
<evidence type="ECO:0000312" key="5">
    <source>
        <dbReference type="EMBL" id="BAE79272.1"/>
    </source>
</evidence>
<reference evidence="5" key="1">
    <citation type="submission" date="2006-02" db="EMBL/GenBank/DDBJ databases">
        <title>Paired box protein 9 isolated from rat thyroid.</title>
        <authorList>
            <person name="Katagiri N."/>
            <person name="Suzuki M."/>
        </authorList>
    </citation>
    <scope>NUCLEOTIDE SEQUENCE [MRNA]</scope>
    <source>
        <strain evidence="5">Wistar</strain>
        <tissue evidence="5">Thyroid</tissue>
    </source>
</reference>